<gene>
    <name type="primary">galE</name>
</gene>
<feature type="chain" id="PRO_0000183207" description="UDP-glucose 4-epimerase">
    <location>
        <begin position="1"/>
        <end position="331"/>
    </location>
</feature>
<feature type="active site" description="Proton acceptor" evidence="1">
    <location>
        <position position="141"/>
    </location>
</feature>
<feature type="binding site" evidence="1">
    <location>
        <begin position="11"/>
        <end position="12"/>
    </location>
    <ligand>
        <name>NAD(+)</name>
        <dbReference type="ChEBI" id="CHEBI:57540"/>
    </ligand>
</feature>
<feature type="binding site" evidence="1">
    <location>
        <begin position="31"/>
        <end position="36"/>
    </location>
    <ligand>
        <name>NAD(+)</name>
        <dbReference type="ChEBI" id="CHEBI:57540"/>
    </ligand>
</feature>
<feature type="binding site" evidence="1">
    <location>
        <begin position="51"/>
        <end position="52"/>
    </location>
    <ligand>
        <name>NAD(+)</name>
        <dbReference type="ChEBI" id="CHEBI:57540"/>
    </ligand>
</feature>
<feature type="binding site" evidence="1">
    <location>
        <begin position="73"/>
        <end position="77"/>
    </location>
    <ligand>
        <name>NAD(+)</name>
        <dbReference type="ChEBI" id="CHEBI:57540"/>
    </ligand>
</feature>
<feature type="binding site" evidence="1">
    <location>
        <position position="92"/>
    </location>
    <ligand>
        <name>NAD(+)</name>
        <dbReference type="ChEBI" id="CHEBI:57540"/>
    </ligand>
</feature>
<feature type="binding site" evidence="1">
    <location>
        <position position="117"/>
    </location>
    <ligand>
        <name>NAD(+)</name>
        <dbReference type="ChEBI" id="CHEBI:57540"/>
    </ligand>
</feature>
<feature type="binding site" evidence="1">
    <location>
        <position position="117"/>
    </location>
    <ligand>
        <name>substrate</name>
    </ligand>
</feature>
<feature type="binding site" evidence="1">
    <location>
        <position position="141"/>
    </location>
    <ligand>
        <name>NAD(+)</name>
        <dbReference type="ChEBI" id="CHEBI:57540"/>
    </ligand>
</feature>
<feature type="binding site" evidence="1">
    <location>
        <position position="141"/>
    </location>
    <ligand>
        <name>substrate</name>
    </ligand>
</feature>
<feature type="binding site" evidence="1">
    <location>
        <position position="145"/>
    </location>
    <ligand>
        <name>NAD(+)</name>
        <dbReference type="ChEBI" id="CHEBI:57540"/>
    </ligand>
</feature>
<feature type="binding site" evidence="1">
    <location>
        <position position="169"/>
    </location>
    <ligand>
        <name>NAD(+)</name>
        <dbReference type="ChEBI" id="CHEBI:57540"/>
    </ligand>
</feature>
<feature type="binding site" evidence="1">
    <location>
        <position position="170"/>
    </location>
    <ligand>
        <name>substrate</name>
    </ligand>
</feature>
<feature type="binding site" evidence="1">
    <location>
        <begin position="189"/>
        <end position="190"/>
    </location>
    <ligand>
        <name>substrate</name>
    </ligand>
</feature>
<feature type="binding site" evidence="1">
    <location>
        <begin position="206"/>
        <end position="208"/>
    </location>
    <ligand>
        <name>substrate</name>
    </ligand>
</feature>
<feature type="binding site" evidence="1">
    <location>
        <position position="221"/>
    </location>
    <ligand>
        <name>substrate</name>
    </ligand>
</feature>
<feature type="binding site" evidence="1">
    <location>
        <begin position="282"/>
        <end position="285"/>
    </location>
    <ligand>
        <name>substrate</name>
    </ligand>
</feature>
<name>GALE_LACCA</name>
<dbReference type="EC" id="5.1.3.2"/>
<dbReference type="EMBL" id="AF005933">
    <property type="protein sequence ID" value="AAC19329.1"/>
    <property type="molecule type" value="Genomic_DNA"/>
</dbReference>
<dbReference type="SMR" id="O84903"/>
<dbReference type="STRING" id="1582.AAW28_10630"/>
<dbReference type="eggNOG" id="COG1087">
    <property type="taxonomic scope" value="Bacteria"/>
</dbReference>
<dbReference type="OMA" id="GEHLICN"/>
<dbReference type="UniPathway" id="UPA00214"/>
<dbReference type="GO" id="GO:0003978">
    <property type="term" value="F:UDP-glucose 4-epimerase activity"/>
    <property type="evidence" value="ECO:0007669"/>
    <property type="project" value="UniProtKB-EC"/>
</dbReference>
<dbReference type="GO" id="GO:0033499">
    <property type="term" value="P:galactose catabolic process via UDP-galactose, Leloir pathway"/>
    <property type="evidence" value="ECO:0007669"/>
    <property type="project" value="TreeGrafter"/>
</dbReference>
<dbReference type="CDD" id="cd05247">
    <property type="entry name" value="UDP_G4E_1_SDR_e"/>
    <property type="match status" value="1"/>
</dbReference>
<dbReference type="Gene3D" id="3.40.50.720">
    <property type="entry name" value="NAD(P)-binding Rossmann-like Domain"/>
    <property type="match status" value="1"/>
</dbReference>
<dbReference type="Gene3D" id="3.90.25.10">
    <property type="entry name" value="UDP-galactose 4-epimerase, domain 1"/>
    <property type="match status" value="1"/>
</dbReference>
<dbReference type="InterPro" id="IPR001509">
    <property type="entry name" value="Epimerase_deHydtase"/>
</dbReference>
<dbReference type="InterPro" id="IPR036291">
    <property type="entry name" value="NAD(P)-bd_dom_sf"/>
</dbReference>
<dbReference type="InterPro" id="IPR005886">
    <property type="entry name" value="UDP_G4E"/>
</dbReference>
<dbReference type="NCBIfam" id="TIGR01179">
    <property type="entry name" value="galE"/>
    <property type="match status" value="1"/>
</dbReference>
<dbReference type="PANTHER" id="PTHR43725:SF53">
    <property type="entry name" value="UDP-ARABINOSE 4-EPIMERASE 1"/>
    <property type="match status" value="1"/>
</dbReference>
<dbReference type="PANTHER" id="PTHR43725">
    <property type="entry name" value="UDP-GLUCOSE 4-EPIMERASE"/>
    <property type="match status" value="1"/>
</dbReference>
<dbReference type="Pfam" id="PF01370">
    <property type="entry name" value="Epimerase"/>
    <property type="match status" value="1"/>
</dbReference>
<dbReference type="SUPFAM" id="SSF51735">
    <property type="entry name" value="NAD(P)-binding Rossmann-fold domains"/>
    <property type="match status" value="1"/>
</dbReference>
<accession>O84903</accession>
<reference key="1">
    <citation type="journal article" date="1998" name="Appl. Environ. Microbiol.">
        <title>The gal genes for the Leloir pathway of Lactobacillus casei 64H.</title>
        <authorList>
            <person name="Bettenbrock K."/>
            <person name="Alpert C.-A."/>
        </authorList>
    </citation>
    <scope>NUCLEOTIDE SEQUENCE [GENOMIC DNA]</scope>
    <source>
        <strain>64H</strain>
    </source>
</reference>
<sequence>MTIAVLGGAGYIGSHTVKQLLAAGEDVVVLDNLITGHRKAVDPRARFYQGDIRDYHFLSQVFSQEKIDGIVHFAAFSIVPESMKDPLKYFDNNTGGMITLLEAMNQFGIKKIVFSSTAATYGEPKQVPIKETDPQVPTNPYGESKLAMEKIMHWADVAYGLKFVALRYFNVAGAMPDGSIGEDHHPETHIVPIILQVAAGTRTGLQIYGDDYPTKDGTNVRDYVHVVDLADAHILALKYLDAGNKSSAFNIGSAHGFSNLEILNAARKVTGQEIPATMGPRRAGDPSTLIASSEKARDILGWKPNYDDIDKIIETAWNWHENHPEGFGDRN</sequence>
<evidence type="ECO:0000250" key="1"/>
<evidence type="ECO:0000305" key="2"/>
<protein>
    <recommendedName>
        <fullName>UDP-glucose 4-epimerase</fullName>
        <ecNumber>5.1.3.2</ecNumber>
    </recommendedName>
    <alternativeName>
        <fullName>Galactowaldenase</fullName>
    </alternativeName>
    <alternativeName>
        <fullName>UDP-galactose 4-epimerase</fullName>
    </alternativeName>
</protein>
<proteinExistence type="inferred from homology"/>
<keyword id="KW-0119">Carbohydrate metabolism</keyword>
<keyword id="KW-0299">Galactose metabolism</keyword>
<keyword id="KW-0413">Isomerase</keyword>
<keyword id="KW-0520">NAD</keyword>
<comment type="catalytic activity">
    <reaction>
        <text>UDP-alpha-D-glucose = UDP-alpha-D-galactose</text>
        <dbReference type="Rhea" id="RHEA:22168"/>
        <dbReference type="ChEBI" id="CHEBI:58885"/>
        <dbReference type="ChEBI" id="CHEBI:66914"/>
        <dbReference type="EC" id="5.1.3.2"/>
    </reaction>
</comment>
<comment type="cofactor">
    <cofactor>
        <name>NAD(+)</name>
        <dbReference type="ChEBI" id="CHEBI:57540"/>
    </cofactor>
</comment>
<comment type="pathway">
    <text>Carbohydrate metabolism; galactose metabolism.</text>
</comment>
<comment type="subunit">
    <text evidence="1">Homodimer.</text>
</comment>
<comment type="similarity">
    <text evidence="2">Belongs to the NAD(P)-dependent epimerase/dehydratase family.</text>
</comment>
<organism>
    <name type="scientific">Lacticaseibacillus casei</name>
    <name type="common">Lactobacillus casei</name>
    <dbReference type="NCBI Taxonomy" id="1582"/>
    <lineage>
        <taxon>Bacteria</taxon>
        <taxon>Bacillati</taxon>
        <taxon>Bacillota</taxon>
        <taxon>Bacilli</taxon>
        <taxon>Lactobacillales</taxon>
        <taxon>Lactobacillaceae</taxon>
        <taxon>Lacticaseibacillus</taxon>
    </lineage>
</organism>